<dbReference type="EMBL" id="CP000308">
    <property type="protein sequence ID" value="ABG16136.1"/>
    <property type="molecule type" value="Genomic_DNA"/>
</dbReference>
<dbReference type="RefSeq" id="WP_002212259.1">
    <property type="nucleotide sequence ID" value="NZ_CP009906.1"/>
</dbReference>
<dbReference type="SMR" id="Q1C086"/>
<dbReference type="GeneID" id="57974594"/>
<dbReference type="KEGG" id="ypa:YPA_4175"/>
<dbReference type="Proteomes" id="UP000001971">
    <property type="component" value="Chromosome"/>
</dbReference>
<dbReference type="GO" id="GO:0005829">
    <property type="term" value="C:cytosol"/>
    <property type="evidence" value="ECO:0007669"/>
    <property type="project" value="TreeGrafter"/>
</dbReference>
<dbReference type="GO" id="GO:0050660">
    <property type="term" value="F:flavin adenine dinucleotide binding"/>
    <property type="evidence" value="ECO:0007669"/>
    <property type="project" value="UniProtKB-UniRule"/>
</dbReference>
<dbReference type="GO" id="GO:0030488">
    <property type="term" value="P:tRNA methylation"/>
    <property type="evidence" value="ECO:0007669"/>
    <property type="project" value="TreeGrafter"/>
</dbReference>
<dbReference type="GO" id="GO:0002098">
    <property type="term" value="P:tRNA wobble uridine modification"/>
    <property type="evidence" value="ECO:0007669"/>
    <property type="project" value="InterPro"/>
</dbReference>
<dbReference type="FunFam" id="1.10.10.1800:FF:000001">
    <property type="entry name" value="tRNA uridine 5-carboxymethylaminomethyl modification enzyme MnmG"/>
    <property type="match status" value="1"/>
</dbReference>
<dbReference type="FunFam" id="1.10.150.570:FF:000001">
    <property type="entry name" value="tRNA uridine 5-carboxymethylaminomethyl modification enzyme MnmG"/>
    <property type="match status" value="1"/>
</dbReference>
<dbReference type="FunFam" id="3.50.50.60:FF:000002">
    <property type="entry name" value="tRNA uridine 5-carboxymethylaminomethyl modification enzyme MnmG"/>
    <property type="match status" value="1"/>
</dbReference>
<dbReference type="FunFam" id="3.50.50.60:FF:000010">
    <property type="entry name" value="tRNA uridine 5-carboxymethylaminomethyl modification enzyme MnmG"/>
    <property type="match status" value="1"/>
</dbReference>
<dbReference type="Gene3D" id="3.50.50.60">
    <property type="entry name" value="FAD/NAD(P)-binding domain"/>
    <property type="match status" value="2"/>
</dbReference>
<dbReference type="Gene3D" id="1.10.150.570">
    <property type="entry name" value="GidA associated domain, C-terminal subdomain"/>
    <property type="match status" value="1"/>
</dbReference>
<dbReference type="Gene3D" id="1.10.10.1800">
    <property type="entry name" value="tRNA uridine 5-carboxymethylaminomethyl modification enzyme MnmG/GidA"/>
    <property type="match status" value="1"/>
</dbReference>
<dbReference type="HAMAP" id="MF_00129">
    <property type="entry name" value="MnmG_GidA"/>
    <property type="match status" value="1"/>
</dbReference>
<dbReference type="InterPro" id="IPR036188">
    <property type="entry name" value="FAD/NAD-bd_sf"/>
</dbReference>
<dbReference type="InterPro" id="IPR049312">
    <property type="entry name" value="GIDA_C_N"/>
</dbReference>
<dbReference type="InterPro" id="IPR004416">
    <property type="entry name" value="MnmG"/>
</dbReference>
<dbReference type="InterPro" id="IPR002218">
    <property type="entry name" value="MnmG-rel"/>
</dbReference>
<dbReference type="InterPro" id="IPR020595">
    <property type="entry name" value="MnmG-rel_CS"/>
</dbReference>
<dbReference type="InterPro" id="IPR026904">
    <property type="entry name" value="MnmG_C"/>
</dbReference>
<dbReference type="InterPro" id="IPR047001">
    <property type="entry name" value="MnmG_C_subdom"/>
</dbReference>
<dbReference type="InterPro" id="IPR044920">
    <property type="entry name" value="MnmG_C_subdom_sf"/>
</dbReference>
<dbReference type="InterPro" id="IPR040131">
    <property type="entry name" value="MnmG_N"/>
</dbReference>
<dbReference type="NCBIfam" id="TIGR00136">
    <property type="entry name" value="mnmG_gidA"/>
    <property type="match status" value="1"/>
</dbReference>
<dbReference type="PANTHER" id="PTHR11806">
    <property type="entry name" value="GLUCOSE INHIBITED DIVISION PROTEIN A"/>
    <property type="match status" value="1"/>
</dbReference>
<dbReference type="PANTHER" id="PTHR11806:SF0">
    <property type="entry name" value="PROTEIN MTO1 HOMOLOG, MITOCHONDRIAL"/>
    <property type="match status" value="1"/>
</dbReference>
<dbReference type="Pfam" id="PF01134">
    <property type="entry name" value="GIDA"/>
    <property type="match status" value="1"/>
</dbReference>
<dbReference type="Pfam" id="PF21680">
    <property type="entry name" value="GIDA_C_1st"/>
    <property type="match status" value="1"/>
</dbReference>
<dbReference type="Pfam" id="PF13932">
    <property type="entry name" value="SAM_GIDA_C"/>
    <property type="match status" value="1"/>
</dbReference>
<dbReference type="SMART" id="SM01228">
    <property type="entry name" value="GIDA_assoc_3"/>
    <property type="match status" value="1"/>
</dbReference>
<dbReference type="SUPFAM" id="SSF51905">
    <property type="entry name" value="FAD/NAD(P)-binding domain"/>
    <property type="match status" value="1"/>
</dbReference>
<dbReference type="PROSITE" id="PS01280">
    <property type="entry name" value="GIDA_1"/>
    <property type="match status" value="1"/>
</dbReference>
<dbReference type="PROSITE" id="PS01281">
    <property type="entry name" value="GIDA_2"/>
    <property type="match status" value="1"/>
</dbReference>
<name>MNMG_YERPA</name>
<proteinExistence type="inferred from homology"/>
<gene>
    <name evidence="1" type="primary">mnmG</name>
    <name evidence="1" type="synonym">gidA</name>
    <name type="ordered locus">YPA_4175</name>
</gene>
<protein>
    <recommendedName>
        <fullName evidence="1">tRNA uridine 5-carboxymethylaminomethyl modification enzyme MnmG</fullName>
    </recommendedName>
    <alternativeName>
        <fullName evidence="1">Glucose-inhibited division protein A</fullName>
    </alternativeName>
</protein>
<reference key="1">
    <citation type="journal article" date="2006" name="J. Bacteriol.">
        <title>Complete genome sequence of Yersinia pestis strains Antiqua and Nepal516: evidence of gene reduction in an emerging pathogen.</title>
        <authorList>
            <person name="Chain P.S.G."/>
            <person name="Hu P."/>
            <person name="Malfatti S.A."/>
            <person name="Radnedge L."/>
            <person name="Larimer F."/>
            <person name="Vergez L.M."/>
            <person name="Worsham P."/>
            <person name="Chu M.C."/>
            <person name="Andersen G.L."/>
        </authorList>
    </citation>
    <scope>NUCLEOTIDE SEQUENCE [LARGE SCALE GENOMIC DNA]</scope>
    <source>
        <strain>Antiqua</strain>
    </source>
</reference>
<comment type="function">
    <text evidence="1">NAD-binding protein involved in the addition of a carboxymethylaminomethyl (cmnm) group at the wobble position (U34) of certain tRNAs, forming tRNA-cmnm(5)s(2)U34.</text>
</comment>
<comment type="cofactor">
    <cofactor evidence="1">
        <name>FAD</name>
        <dbReference type="ChEBI" id="CHEBI:57692"/>
    </cofactor>
</comment>
<comment type="subunit">
    <text evidence="1">Homodimer. Heterotetramer of two MnmE and two MnmG subunits.</text>
</comment>
<comment type="subcellular location">
    <subcellularLocation>
        <location evidence="1">Cytoplasm</location>
    </subcellularLocation>
</comment>
<comment type="similarity">
    <text evidence="1">Belongs to the MnmG family.</text>
</comment>
<organism>
    <name type="scientific">Yersinia pestis bv. Antiqua (strain Antiqua)</name>
    <dbReference type="NCBI Taxonomy" id="360102"/>
    <lineage>
        <taxon>Bacteria</taxon>
        <taxon>Pseudomonadati</taxon>
        <taxon>Pseudomonadota</taxon>
        <taxon>Gammaproteobacteria</taxon>
        <taxon>Enterobacterales</taxon>
        <taxon>Yersiniaceae</taxon>
        <taxon>Yersinia</taxon>
    </lineage>
</organism>
<sequence length="629" mass="70039">MFYPDQFDVIIIGGGHAGTEAAMAAARMGRQTLLLTHNIDTLGQMSCNPAIGGIGKGHLVKEIDALGGLMAKATDLAGIQFRILNASKGPAVRATRAQADRVLYRLAVRTALENQPNLMIFQQPVEDLIVENDRVVGAVTQMGLKFRAKAVVLTVGTFLDGKIHIGLENYSGGRAGDPPSISLSQRLRELPLRVNRLKTGTPPRIDARTIDFSQLTPQLGDTPIPVFSFLGNAEQHPEQMACHITYTNEKTHEVIRNNLDRSPMYAGIIEGIGPRYCPSIEDKVMRFADRNSHQIFLEPEGLTSNEIYPNGISTSLPFDVQMQIVRSMKGLENARIIRPGYAIEYDFFDPRDLKPTLESKYIQGLFFAGQINGTTGYEEAAAQGLLAGLNAGRFANEEDGWSPRRDEAYLGVLVDDLSTLGTKEPYRMFTSRAEYRLMLREDNADLRLTETGRKLGLVDDIRWAHFSQKVEQIEKERQRLRDIWVHPHSENVSEINALLKAPLSKEANGEELLRRPEIDYRLLTSLTSFGPALTDPQSADQVEIQVKYEGYITRQQEEIEKQLRNENTLLPVDLDYQQVSGLSNEVIAKLNDHKPSSIGQASRISGITPAAISILLVWLKKQGLLRRSA</sequence>
<evidence type="ECO:0000255" key="1">
    <source>
        <dbReference type="HAMAP-Rule" id="MF_00129"/>
    </source>
</evidence>
<keyword id="KW-0963">Cytoplasm</keyword>
<keyword id="KW-0274">FAD</keyword>
<keyword id="KW-0285">Flavoprotein</keyword>
<keyword id="KW-0520">NAD</keyword>
<keyword id="KW-0819">tRNA processing</keyword>
<accession>Q1C086</accession>
<feature type="chain" id="PRO_1000016711" description="tRNA uridine 5-carboxymethylaminomethyl modification enzyme MnmG">
    <location>
        <begin position="1"/>
        <end position="629"/>
    </location>
</feature>
<feature type="binding site" evidence="1">
    <location>
        <begin position="13"/>
        <end position="18"/>
    </location>
    <ligand>
        <name>FAD</name>
        <dbReference type="ChEBI" id="CHEBI:57692"/>
    </ligand>
</feature>
<feature type="binding site" evidence="1">
    <location>
        <position position="125"/>
    </location>
    <ligand>
        <name>FAD</name>
        <dbReference type="ChEBI" id="CHEBI:57692"/>
    </ligand>
</feature>
<feature type="binding site" evidence="1">
    <location>
        <position position="180"/>
    </location>
    <ligand>
        <name>FAD</name>
        <dbReference type="ChEBI" id="CHEBI:57692"/>
    </ligand>
</feature>
<feature type="binding site" evidence="1">
    <location>
        <begin position="273"/>
        <end position="287"/>
    </location>
    <ligand>
        <name>NAD(+)</name>
        <dbReference type="ChEBI" id="CHEBI:57540"/>
    </ligand>
</feature>
<feature type="binding site" evidence="1">
    <location>
        <position position="370"/>
    </location>
    <ligand>
        <name>FAD</name>
        <dbReference type="ChEBI" id="CHEBI:57692"/>
    </ligand>
</feature>